<organism>
    <name type="scientific">Shigella flexneri serotype 5b (strain 8401)</name>
    <dbReference type="NCBI Taxonomy" id="373384"/>
    <lineage>
        <taxon>Bacteria</taxon>
        <taxon>Pseudomonadati</taxon>
        <taxon>Pseudomonadota</taxon>
        <taxon>Gammaproteobacteria</taxon>
        <taxon>Enterobacterales</taxon>
        <taxon>Enterobacteriaceae</taxon>
        <taxon>Shigella</taxon>
    </lineage>
</organism>
<comment type="function">
    <text evidence="1">Involved in the modulation of the activity of the glucose-phosphotransferase system (glucose-PTS). Interacts with the transcriptional repressor Mlc, preventing its interaction with DNA and leading to the modulation of expression of genes regulated by Mlc, including ptsG, which encodes the PTS system glucose-specific EIICB component.</text>
</comment>
<comment type="function">
    <text evidence="1">Shows zinc-dependent metallopeptidase activity.</text>
</comment>
<comment type="cofactor">
    <cofactor evidence="1">
        <name>Zn(2+)</name>
        <dbReference type="ChEBI" id="CHEBI:29105"/>
    </cofactor>
    <text evidence="1">Binds 1 zinc ion per subunit.</text>
</comment>
<comment type="subunit">
    <text evidence="1">Interacts with Mlc.</text>
</comment>
<comment type="subcellular location">
    <subcellularLocation>
        <location evidence="1">Cytoplasm</location>
    </subcellularLocation>
</comment>
<comment type="similarity">
    <text evidence="1">Belongs to the MtfA family.</text>
</comment>
<proteinExistence type="inferred from homology"/>
<gene>
    <name evidence="1" type="primary">mtfA</name>
    <name type="ordered locus">SFV_2045</name>
</gene>
<evidence type="ECO:0000255" key="1">
    <source>
        <dbReference type="HAMAP-Rule" id="MF_01593"/>
    </source>
</evidence>
<feature type="chain" id="PRO_0000316326" description="Mlc titration factor A">
    <location>
        <begin position="1"/>
        <end position="265"/>
    </location>
</feature>
<feature type="binding site" evidence="1">
    <location>
        <position position="111"/>
    </location>
    <ligand>
        <name>Zn(2+)</name>
        <dbReference type="ChEBI" id="CHEBI:29105"/>
    </ligand>
</feature>
<feature type="binding site" evidence="1">
    <location>
        <position position="148"/>
    </location>
    <ligand>
        <name>Zn(2+)</name>
        <dbReference type="ChEBI" id="CHEBI:29105"/>
    </ligand>
</feature>
<feature type="binding site" evidence="1">
    <location>
        <position position="152"/>
    </location>
    <ligand>
        <name>Zn(2+)</name>
        <dbReference type="ChEBI" id="CHEBI:29105"/>
    </ligand>
</feature>
<feature type="binding site" evidence="1">
    <location>
        <position position="211"/>
    </location>
    <ligand>
        <name>Zn(2+)</name>
        <dbReference type="ChEBI" id="CHEBI:29105"/>
    </ligand>
</feature>
<reference key="1">
    <citation type="journal article" date="2006" name="BMC Genomics">
        <title>Complete genome sequence of Shigella flexneri 5b and comparison with Shigella flexneri 2a.</title>
        <authorList>
            <person name="Nie H."/>
            <person name="Yang F."/>
            <person name="Zhang X."/>
            <person name="Yang J."/>
            <person name="Chen L."/>
            <person name="Wang J."/>
            <person name="Xiong Z."/>
            <person name="Peng J."/>
            <person name="Sun L."/>
            <person name="Dong J."/>
            <person name="Xue Y."/>
            <person name="Xu X."/>
            <person name="Chen S."/>
            <person name="Yao Z."/>
            <person name="Shen Y."/>
            <person name="Jin Q."/>
        </authorList>
    </citation>
    <scope>NUCLEOTIDE SEQUENCE [LARGE SCALE GENOMIC DNA]</scope>
    <source>
        <strain>8401</strain>
    </source>
</reference>
<sequence>MIKWPWKVQESAHQTALPWQEALSIPLLTCLTEQEQSKLVALAERFLQQKRLVPLQGFELNSLRSCRIALLFCLPVLELGLEWLDGFHEVLIYPAPFVVDDEWEDDIGLVHNQRIVQSGQSWQQGPIVLNWLDIQDSFDASGFNLIIHEVAHKLDTRNGDRASGVPFISLREVAGWEHDLHAAMNNIQEEIELVGENAASIDAYAASDPAECFAVLSEYFFSAPELFAPRFPSLWQRFCQFYQQDPLQRLHHANDTDSFSATNVH</sequence>
<dbReference type="EC" id="3.4.11.-" evidence="1"/>
<dbReference type="EMBL" id="CP000266">
    <property type="protein sequence ID" value="ABF04178.1"/>
    <property type="molecule type" value="Genomic_DNA"/>
</dbReference>
<dbReference type="RefSeq" id="WP_001325918.1">
    <property type="nucleotide sequence ID" value="NC_008258.1"/>
</dbReference>
<dbReference type="SMR" id="Q0T3D7"/>
<dbReference type="MEROPS" id="M90.001"/>
<dbReference type="KEGG" id="sfv:SFV_2045"/>
<dbReference type="HOGENOM" id="CLU_063037_2_0_6"/>
<dbReference type="Proteomes" id="UP000000659">
    <property type="component" value="Chromosome"/>
</dbReference>
<dbReference type="GO" id="GO:0005829">
    <property type="term" value="C:cytosol"/>
    <property type="evidence" value="ECO:0007669"/>
    <property type="project" value="TreeGrafter"/>
</dbReference>
<dbReference type="GO" id="GO:0004177">
    <property type="term" value="F:aminopeptidase activity"/>
    <property type="evidence" value="ECO:0007669"/>
    <property type="project" value="UniProtKB-UniRule"/>
</dbReference>
<dbReference type="GO" id="GO:0008237">
    <property type="term" value="F:metallopeptidase activity"/>
    <property type="evidence" value="ECO:0007669"/>
    <property type="project" value="UniProtKB-UniRule"/>
</dbReference>
<dbReference type="GO" id="GO:0008270">
    <property type="term" value="F:zinc ion binding"/>
    <property type="evidence" value="ECO:0007669"/>
    <property type="project" value="UniProtKB-UniRule"/>
</dbReference>
<dbReference type="GO" id="GO:0006508">
    <property type="term" value="P:proteolysis"/>
    <property type="evidence" value="ECO:0007669"/>
    <property type="project" value="UniProtKB-KW"/>
</dbReference>
<dbReference type="CDD" id="cd20169">
    <property type="entry name" value="Peptidase_M90_mtfA"/>
    <property type="match status" value="1"/>
</dbReference>
<dbReference type="FunFam" id="1.10.472.150:FF:000001">
    <property type="entry name" value="Protein MtfA"/>
    <property type="match status" value="1"/>
</dbReference>
<dbReference type="FunFam" id="3.40.390.10:FF:000012">
    <property type="entry name" value="Protein MtfA"/>
    <property type="match status" value="1"/>
</dbReference>
<dbReference type="Gene3D" id="3.40.390.10">
    <property type="entry name" value="Collagenase (Catalytic Domain)"/>
    <property type="match status" value="1"/>
</dbReference>
<dbReference type="Gene3D" id="1.10.472.150">
    <property type="entry name" value="Glucose-regulated metallo-peptidase M90, N-terminal domain"/>
    <property type="match status" value="1"/>
</dbReference>
<dbReference type="HAMAP" id="MF_01593">
    <property type="entry name" value="MtfA"/>
    <property type="match status" value="1"/>
</dbReference>
<dbReference type="InterPro" id="IPR024079">
    <property type="entry name" value="MetalloPept_cat_dom_sf"/>
</dbReference>
<dbReference type="InterPro" id="IPR057256">
    <property type="entry name" value="MtfA_enterob"/>
</dbReference>
<dbReference type="InterPro" id="IPR010384">
    <property type="entry name" value="MtfA_fam"/>
</dbReference>
<dbReference type="InterPro" id="IPR042252">
    <property type="entry name" value="MtfA_N"/>
</dbReference>
<dbReference type="NCBIfam" id="NF011939">
    <property type="entry name" value="PRK15410.1"/>
    <property type="match status" value="1"/>
</dbReference>
<dbReference type="PANTHER" id="PTHR30164">
    <property type="entry name" value="MTFA PEPTIDASE"/>
    <property type="match status" value="1"/>
</dbReference>
<dbReference type="PANTHER" id="PTHR30164:SF2">
    <property type="entry name" value="PROTEIN MTFA"/>
    <property type="match status" value="1"/>
</dbReference>
<dbReference type="Pfam" id="PF06167">
    <property type="entry name" value="Peptidase_M90"/>
    <property type="match status" value="1"/>
</dbReference>
<dbReference type="SUPFAM" id="SSF55486">
    <property type="entry name" value="Metalloproteases ('zincins'), catalytic domain"/>
    <property type="match status" value="1"/>
</dbReference>
<name>MTFA_SHIF8</name>
<protein>
    <recommendedName>
        <fullName evidence="1">Mlc titration factor A</fullName>
    </recommendedName>
    <alternativeName>
        <fullName evidence="1">Probable zinc metallopeptidase MtfA</fullName>
        <ecNumber evidence="1">3.4.11.-</ecNumber>
    </alternativeName>
</protein>
<keyword id="KW-0031">Aminopeptidase</keyword>
<keyword id="KW-0963">Cytoplasm</keyword>
<keyword id="KW-0378">Hydrolase</keyword>
<keyword id="KW-0479">Metal-binding</keyword>
<keyword id="KW-0482">Metalloprotease</keyword>
<keyword id="KW-0645">Protease</keyword>
<keyword id="KW-0862">Zinc</keyword>
<accession>Q0T3D7</accession>